<accession>P0CX02</accession>
<accession>P15350</accession>
<accession>Q9HM79</accession>
<dbReference type="EC" id="2.7.7.6" evidence="1"/>
<dbReference type="EMBL" id="AE004437">
    <property type="protein sequence ID" value="AAG20692.1"/>
    <property type="status" value="ALT_INIT"/>
    <property type="molecule type" value="Genomic_DNA"/>
</dbReference>
<dbReference type="PIR" id="H84415">
    <property type="entry name" value="H84415"/>
</dbReference>
<dbReference type="RefSeq" id="WP_010903996.1">
    <property type="nucleotide sequence ID" value="NC_002607.1"/>
</dbReference>
<dbReference type="SMR" id="P0CX02"/>
<dbReference type="FunCoup" id="P0CX02">
    <property type="interactions" value="136"/>
</dbReference>
<dbReference type="STRING" id="64091.VNG_2664G"/>
<dbReference type="PaxDb" id="64091-VNG_2664G"/>
<dbReference type="KEGG" id="hal:VNG_2664G"/>
<dbReference type="PATRIC" id="fig|64091.14.peg.2069"/>
<dbReference type="HOGENOM" id="CLU_000487_3_1_2"/>
<dbReference type="InParanoid" id="P0CX02"/>
<dbReference type="OrthoDB" id="371812at2157"/>
<dbReference type="PhylomeDB" id="P0CX02"/>
<dbReference type="Proteomes" id="UP000000554">
    <property type="component" value="Chromosome"/>
</dbReference>
<dbReference type="GO" id="GO:0005737">
    <property type="term" value="C:cytoplasm"/>
    <property type="evidence" value="ECO:0007669"/>
    <property type="project" value="UniProtKB-SubCell"/>
</dbReference>
<dbReference type="GO" id="GO:0000428">
    <property type="term" value="C:DNA-directed RNA polymerase complex"/>
    <property type="evidence" value="ECO:0007669"/>
    <property type="project" value="UniProtKB-KW"/>
</dbReference>
<dbReference type="GO" id="GO:0003677">
    <property type="term" value="F:DNA binding"/>
    <property type="evidence" value="ECO:0007669"/>
    <property type="project" value="UniProtKB-UniRule"/>
</dbReference>
<dbReference type="GO" id="GO:0003899">
    <property type="term" value="F:DNA-directed RNA polymerase activity"/>
    <property type="evidence" value="ECO:0007669"/>
    <property type="project" value="UniProtKB-UniRule"/>
</dbReference>
<dbReference type="GO" id="GO:0000287">
    <property type="term" value="F:magnesium ion binding"/>
    <property type="evidence" value="ECO:0007669"/>
    <property type="project" value="UniProtKB-UniRule"/>
</dbReference>
<dbReference type="GO" id="GO:0008270">
    <property type="term" value="F:zinc ion binding"/>
    <property type="evidence" value="ECO:0007669"/>
    <property type="project" value="UniProtKB-UniRule"/>
</dbReference>
<dbReference type="GO" id="GO:0006351">
    <property type="term" value="P:DNA-templated transcription"/>
    <property type="evidence" value="ECO:0007669"/>
    <property type="project" value="UniProtKB-UniRule"/>
</dbReference>
<dbReference type="CDD" id="cd02582">
    <property type="entry name" value="RNAP_archeal_A"/>
    <property type="match status" value="1"/>
</dbReference>
<dbReference type="FunFam" id="2.40.40.20:FF:000019">
    <property type="entry name" value="DNA-directed RNA polymerase II subunit RPB1"/>
    <property type="match status" value="1"/>
</dbReference>
<dbReference type="Gene3D" id="1.10.132.30">
    <property type="match status" value="1"/>
</dbReference>
<dbReference type="Gene3D" id="2.40.40.20">
    <property type="match status" value="1"/>
</dbReference>
<dbReference type="Gene3D" id="6.10.250.2940">
    <property type="match status" value="1"/>
</dbReference>
<dbReference type="Gene3D" id="6.20.50.80">
    <property type="match status" value="1"/>
</dbReference>
<dbReference type="Gene3D" id="3.30.1490.180">
    <property type="entry name" value="RNA polymerase ii"/>
    <property type="match status" value="1"/>
</dbReference>
<dbReference type="Gene3D" id="4.10.860.120">
    <property type="entry name" value="RNA polymerase II, clamp domain"/>
    <property type="match status" value="2"/>
</dbReference>
<dbReference type="Gene3D" id="1.10.274.100">
    <property type="entry name" value="RNA polymerase Rpb1, domain 3"/>
    <property type="match status" value="1"/>
</dbReference>
<dbReference type="HAMAP" id="MF_00863">
    <property type="entry name" value="RNApol_arch_Rpo1N"/>
    <property type="match status" value="1"/>
</dbReference>
<dbReference type="InterPro" id="IPR045867">
    <property type="entry name" value="DNA-dir_RpoC_beta_prime"/>
</dbReference>
<dbReference type="InterPro" id="IPR000722">
    <property type="entry name" value="RNA_pol_asu"/>
</dbReference>
<dbReference type="InterPro" id="IPR006592">
    <property type="entry name" value="RNA_pol_N"/>
</dbReference>
<dbReference type="InterPro" id="IPR007080">
    <property type="entry name" value="RNA_pol_Rpb1_1"/>
</dbReference>
<dbReference type="InterPro" id="IPR007066">
    <property type="entry name" value="RNA_pol_Rpb1_3"/>
</dbReference>
<dbReference type="InterPro" id="IPR042102">
    <property type="entry name" value="RNA_pol_Rpb1_3_sf"/>
</dbReference>
<dbReference type="InterPro" id="IPR007083">
    <property type="entry name" value="RNA_pol_Rpb1_4"/>
</dbReference>
<dbReference type="InterPro" id="IPR007081">
    <property type="entry name" value="RNA_pol_Rpb1_5"/>
</dbReference>
<dbReference type="InterPro" id="IPR044893">
    <property type="entry name" value="RNA_pol_Rpb1_clamp_domain"/>
</dbReference>
<dbReference type="InterPro" id="IPR038120">
    <property type="entry name" value="Rpb1_funnel_sf"/>
</dbReference>
<dbReference type="InterPro" id="IPR012758">
    <property type="entry name" value="RPO1N"/>
</dbReference>
<dbReference type="NCBIfam" id="NF006336">
    <property type="entry name" value="PRK08566.1"/>
    <property type="match status" value="1"/>
</dbReference>
<dbReference type="NCBIfam" id="TIGR02390">
    <property type="entry name" value="RNA_pol_rpoA1"/>
    <property type="match status" value="1"/>
</dbReference>
<dbReference type="PANTHER" id="PTHR19376">
    <property type="entry name" value="DNA-DIRECTED RNA POLYMERASE"/>
    <property type="match status" value="1"/>
</dbReference>
<dbReference type="PANTHER" id="PTHR19376:SF32">
    <property type="entry name" value="DNA-DIRECTED RNA POLYMERASE III SUBUNIT RPC1"/>
    <property type="match status" value="1"/>
</dbReference>
<dbReference type="Pfam" id="PF04997">
    <property type="entry name" value="RNA_pol_Rpb1_1"/>
    <property type="match status" value="1"/>
</dbReference>
<dbReference type="Pfam" id="PF00623">
    <property type="entry name" value="RNA_pol_Rpb1_2"/>
    <property type="match status" value="1"/>
</dbReference>
<dbReference type="Pfam" id="PF04983">
    <property type="entry name" value="RNA_pol_Rpb1_3"/>
    <property type="match status" value="1"/>
</dbReference>
<dbReference type="Pfam" id="PF05000">
    <property type="entry name" value="RNA_pol_Rpb1_4"/>
    <property type="match status" value="1"/>
</dbReference>
<dbReference type="Pfam" id="PF04998">
    <property type="entry name" value="RNA_pol_Rpb1_5"/>
    <property type="match status" value="1"/>
</dbReference>
<dbReference type="SMART" id="SM00663">
    <property type="entry name" value="RPOLA_N"/>
    <property type="match status" value="1"/>
</dbReference>
<dbReference type="SUPFAM" id="SSF64484">
    <property type="entry name" value="beta and beta-prime subunits of DNA dependent RNA-polymerase"/>
    <property type="match status" value="1"/>
</dbReference>
<reference key="1">
    <citation type="journal article" date="2000" name="Proc. Natl. Acad. Sci. U.S.A.">
        <title>Genome sequence of Halobacterium species NRC-1.</title>
        <authorList>
            <person name="Ng W.V."/>
            <person name="Kennedy S.P."/>
            <person name="Mahairas G.G."/>
            <person name="Berquist B."/>
            <person name="Pan M."/>
            <person name="Shukla H.D."/>
            <person name="Lasky S.R."/>
            <person name="Baliga N.S."/>
            <person name="Thorsson V."/>
            <person name="Sbrogna J."/>
            <person name="Swartzell S."/>
            <person name="Weir D."/>
            <person name="Hall J."/>
            <person name="Dahl T.A."/>
            <person name="Welti R."/>
            <person name="Goo Y.A."/>
            <person name="Leithauser B."/>
            <person name="Keller K."/>
            <person name="Cruz R."/>
            <person name="Danson M.J."/>
            <person name="Hough D.W."/>
            <person name="Maddocks D.G."/>
            <person name="Jablonski P.E."/>
            <person name="Krebs M.P."/>
            <person name="Angevine C.M."/>
            <person name="Dale H."/>
            <person name="Isenbarger T.A."/>
            <person name="Peck R.F."/>
            <person name="Pohlschroder M."/>
            <person name="Spudich J.L."/>
            <person name="Jung K.-H."/>
            <person name="Alam M."/>
            <person name="Freitas T."/>
            <person name="Hou S."/>
            <person name="Daniels C.J."/>
            <person name="Dennis P.P."/>
            <person name="Omer A.D."/>
            <person name="Ebhardt H."/>
            <person name="Lowe T.M."/>
            <person name="Liang P."/>
            <person name="Riley M."/>
            <person name="Hood L."/>
            <person name="DasSarma S."/>
        </authorList>
    </citation>
    <scope>NUCLEOTIDE SEQUENCE [LARGE SCALE GENOMIC DNA]</scope>
    <source>
        <strain>ATCC 700922 / JCM 11081 / NRC-1</strain>
    </source>
</reference>
<keyword id="KW-0963">Cytoplasm</keyword>
<keyword id="KW-0238">DNA-binding</keyword>
<keyword id="KW-0240">DNA-directed RNA polymerase</keyword>
<keyword id="KW-0460">Magnesium</keyword>
<keyword id="KW-0479">Metal-binding</keyword>
<keyword id="KW-0548">Nucleotidyltransferase</keyword>
<keyword id="KW-1185">Reference proteome</keyword>
<keyword id="KW-0804">Transcription</keyword>
<keyword id="KW-0808">Transferase</keyword>
<keyword id="KW-0862">Zinc</keyword>
<comment type="function">
    <text evidence="1">DNA-dependent RNA polymerase (RNAP) catalyzes the transcription of DNA into RNA using the four ribonucleoside triphosphates as substrates. Forms the clamp head domain.</text>
</comment>
<comment type="catalytic activity">
    <reaction evidence="1">
        <text>RNA(n) + a ribonucleoside 5'-triphosphate = RNA(n+1) + diphosphate</text>
        <dbReference type="Rhea" id="RHEA:21248"/>
        <dbReference type="Rhea" id="RHEA-COMP:14527"/>
        <dbReference type="Rhea" id="RHEA-COMP:17342"/>
        <dbReference type="ChEBI" id="CHEBI:33019"/>
        <dbReference type="ChEBI" id="CHEBI:61557"/>
        <dbReference type="ChEBI" id="CHEBI:140395"/>
        <dbReference type="EC" id="2.7.7.6"/>
    </reaction>
</comment>
<comment type="cofactor">
    <cofactor evidence="1">
        <name>Mg(2+)</name>
        <dbReference type="ChEBI" id="CHEBI:18420"/>
    </cofactor>
</comment>
<comment type="cofactor">
    <cofactor evidence="1">
        <name>Zn(2+)</name>
        <dbReference type="ChEBI" id="CHEBI:29105"/>
    </cofactor>
    <text evidence="1">Binds at least 2 Zn(2+) per subunit.</text>
</comment>
<comment type="subunit">
    <text evidence="1">Part of the RNA polymerase complex.</text>
</comment>
<comment type="subcellular location">
    <subcellularLocation>
        <location evidence="1">Cytoplasm</location>
    </subcellularLocation>
</comment>
<comment type="similarity">
    <text evidence="1">Belongs to the RNA polymerase beta' chain family.</text>
</comment>
<comment type="sequence caution" evidence="3">
    <conflict type="erroneous initiation">
        <sequence resource="EMBL-CDS" id="AAG20692"/>
    </conflict>
    <text>Truncated N-terminus.</text>
</comment>
<evidence type="ECO:0000255" key="1">
    <source>
        <dbReference type="HAMAP-Rule" id="MF_00863"/>
    </source>
</evidence>
<evidence type="ECO:0000256" key="2">
    <source>
        <dbReference type="SAM" id="MobiDB-lite"/>
    </source>
</evidence>
<evidence type="ECO:0000305" key="3"/>
<feature type="chain" id="PRO_0000074003" description="DNA-directed RNA polymerase subunit Rpo1N">
    <location>
        <begin position="1"/>
        <end position="971"/>
    </location>
</feature>
<feature type="region of interest" description="Disordered" evidence="2">
    <location>
        <begin position="185"/>
        <end position="204"/>
    </location>
</feature>
<feature type="region of interest" description="Disordered" evidence="2">
    <location>
        <begin position="951"/>
        <end position="971"/>
    </location>
</feature>
<feature type="binding site" evidence="1">
    <location>
        <position position="62"/>
    </location>
    <ligand>
        <name>Zn(2+)</name>
        <dbReference type="ChEBI" id="CHEBI:29105"/>
        <label>1</label>
    </ligand>
</feature>
<feature type="binding site" evidence="1">
    <location>
        <position position="65"/>
    </location>
    <ligand>
        <name>Zn(2+)</name>
        <dbReference type="ChEBI" id="CHEBI:29105"/>
        <label>1</label>
    </ligand>
</feature>
<feature type="binding site" evidence="1">
    <location>
        <position position="72"/>
    </location>
    <ligand>
        <name>Zn(2+)</name>
        <dbReference type="ChEBI" id="CHEBI:29105"/>
        <label>1</label>
    </ligand>
</feature>
<feature type="binding site" evidence="1">
    <location>
        <position position="75"/>
    </location>
    <ligand>
        <name>Zn(2+)</name>
        <dbReference type="ChEBI" id="CHEBI:29105"/>
        <label>1</label>
    </ligand>
</feature>
<feature type="binding site" evidence="1">
    <location>
        <position position="102"/>
    </location>
    <ligand>
        <name>Zn(2+)</name>
        <dbReference type="ChEBI" id="CHEBI:29105"/>
        <label>2</label>
    </ligand>
</feature>
<feature type="binding site" evidence="1">
    <location>
        <position position="105"/>
    </location>
    <ligand>
        <name>Zn(2+)</name>
        <dbReference type="ChEBI" id="CHEBI:29105"/>
        <label>2</label>
    </ligand>
</feature>
<feature type="binding site" evidence="1">
    <location>
        <position position="149"/>
    </location>
    <ligand>
        <name>Zn(2+)</name>
        <dbReference type="ChEBI" id="CHEBI:29105"/>
        <label>2</label>
    </ligand>
</feature>
<feature type="binding site" evidence="1">
    <location>
        <position position="152"/>
    </location>
    <ligand>
        <name>Zn(2+)</name>
        <dbReference type="ChEBI" id="CHEBI:29105"/>
        <label>2</label>
    </ligand>
</feature>
<feature type="binding site" evidence="1">
    <location>
        <position position="527"/>
    </location>
    <ligand>
        <name>Mg(2+)</name>
        <dbReference type="ChEBI" id="CHEBI:18420"/>
    </ligand>
</feature>
<feature type="binding site" evidence="1">
    <location>
        <position position="529"/>
    </location>
    <ligand>
        <name>Mg(2+)</name>
        <dbReference type="ChEBI" id="CHEBI:18420"/>
    </ligand>
</feature>
<feature type="binding site" evidence="1">
    <location>
        <position position="531"/>
    </location>
    <ligand>
        <name>Mg(2+)</name>
        <dbReference type="ChEBI" id="CHEBI:18420"/>
    </ligand>
</feature>
<proteinExistence type="inferred from homology"/>
<organism>
    <name type="scientific">Halobacterium salinarum (strain ATCC 700922 / JCM 11081 / NRC-1)</name>
    <name type="common">Halobacterium halobium</name>
    <dbReference type="NCBI Taxonomy" id="64091"/>
    <lineage>
        <taxon>Archaea</taxon>
        <taxon>Methanobacteriati</taxon>
        <taxon>Methanobacteriota</taxon>
        <taxon>Stenosarchaea group</taxon>
        <taxon>Halobacteria</taxon>
        <taxon>Halobacteriales</taxon>
        <taxon>Halobacteriaceae</taxon>
        <taxon>Halobacterium</taxon>
        <taxon>Halobacterium salinarum NRC-34001</taxon>
    </lineage>
</organism>
<gene>
    <name evidence="1" type="primary">rpo1N</name>
    <name evidence="1" type="synonym">rpoA1</name>
    <name type="ordered locus">VNG_2664G</name>
</gene>
<sequence length="971" mass="108734">MSAGQAPKEIGEISFGLMDPEEYRDMSATKVITADTYDDDGFPIDMGLMDPRLGVIDPGLECKTCGQRSGGCNGHFGHIELAAPVIHVGFSKLIRRLLRGTCRECASLLLTEEEKDEYRENLDRTRSLRQDVSDVMTAAIREARKKDHCPHCGEVQYDVKHEKPTTYYEVQQVLASDYSERIAASMQPDEDEDDAGVSPQELAEQTDIDISRINEILSGEFRPRREDREAIETAIGADLTTEDMNKLMPSDIRDWFEDIPGEDLEALGVNSDRSRPEWMILTVLPVPPVTARPSITLDNGQRSEDDLTHKLVDIIRINQRFMENREAGAPQLIIEDLWELLQYHVTTFMDNEISGTPPARHRSGRPLKTLSQRLKGKEGRFRGSLSGKRVNFSARTVISPDPTLSLNEVGVPDRVATEMTQTMVVNEQNLERARRYVRNGPEGHPGANYVTRPDGRRVRVTEKVCEELAERVEPGWEVQRHLIDGDIIIFNRQPSLHRMSIMAHEVVVMPYKTFRLNTVVCPPYNADFDGDEMNMHALQNEEARAEARVLMRVQEQILSPRFGENIIGAIQDHISGTYLLTNDNPRFNETQASDLLRQTRIDELPAAAGTDEDGDQYWTGHQIFSELLPDDLSLEFTGTTGDTVVIEDGQLLEGTIADDEVGEYGSEIVDTITKVHGNTRARIFINEVASLAMRSIMHFGFSIGIDDETVSTEARERIDEAIQSAYDRVQELIETYENGDLESLPGRTVDETLEMKIMQTLGKARDSAGDVAEENFDEDNPAVVMANSGARGSMLNLTQMAGCVGQQAVRGERINRGYEDRTLSHFAPNDLSSEAHGFVENSYTSGLTPKEFFFHAMGGREGLVDTAVRTSKSGYLQRRLINALSELETQYDGTVRDTSDTIVQFEFGEDGTSPVQVSSNEEVDIDVEHVADRILNSEFDSDTQKAEFLEVEEPPTNLSEHGAAWEVESDD</sequence>
<protein>
    <recommendedName>
        <fullName evidence="1">DNA-directed RNA polymerase subunit Rpo1N</fullName>
        <ecNumber evidence="1">2.7.7.6</ecNumber>
    </recommendedName>
    <alternativeName>
        <fullName evidence="1">DNA-directed RNA polymerase subunit A'</fullName>
    </alternativeName>
</protein>
<name>RPO1N_HALSA</name>